<gene>
    <name evidence="1" type="primary">truB</name>
    <name type="ordered locus">NT01CX_2133</name>
</gene>
<accession>A0Q0Q4</accession>
<organism>
    <name type="scientific">Clostridium novyi (strain NT)</name>
    <dbReference type="NCBI Taxonomy" id="386415"/>
    <lineage>
        <taxon>Bacteria</taxon>
        <taxon>Bacillati</taxon>
        <taxon>Bacillota</taxon>
        <taxon>Clostridia</taxon>
        <taxon>Eubacteriales</taxon>
        <taxon>Clostridiaceae</taxon>
        <taxon>Clostridium</taxon>
    </lineage>
</organism>
<comment type="function">
    <text evidence="1">Responsible for synthesis of pseudouridine from uracil-55 in the psi GC loop of transfer RNAs.</text>
</comment>
<comment type="catalytic activity">
    <reaction evidence="1">
        <text>uridine(55) in tRNA = pseudouridine(55) in tRNA</text>
        <dbReference type="Rhea" id="RHEA:42532"/>
        <dbReference type="Rhea" id="RHEA-COMP:10101"/>
        <dbReference type="Rhea" id="RHEA-COMP:10102"/>
        <dbReference type="ChEBI" id="CHEBI:65314"/>
        <dbReference type="ChEBI" id="CHEBI:65315"/>
        <dbReference type="EC" id="5.4.99.25"/>
    </reaction>
</comment>
<comment type="similarity">
    <text evidence="1">Belongs to the pseudouridine synthase TruB family. Type 1 subfamily.</text>
</comment>
<name>TRUB_CLONN</name>
<reference key="1">
    <citation type="journal article" date="2006" name="Nat. Biotechnol.">
        <title>The genome and transcriptomes of the anti-tumor agent Clostridium novyi-NT.</title>
        <authorList>
            <person name="Bettegowda C."/>
            <person name="Huang X."/>
            <person name="Lin J."/>
            <person name="Cheong I."/>
            <person name="Kohli M."/>
            <person name="Szabo S.A."/>
            <person name="Zhang X."/>
            <person name="Diaz L.A. Jr."/>
            <person name="Velculescu V.E."/>
            <person name="Parmigiani G."/>
            <person name="Kinzler K.W."/>
            <person name="Vogelstein B."/>
            <person name="Zhou S."/>
        </authorList>
    </citation>
    <scope>NUCLEOTIDE SEQUENCE [LARGE SCALE GENOMIC DNA]</scope>
    <source>
        <strain>NT</strain>
    </source>
</reference>
<proteinExistence type="inferred from homology"/>
<evidence type="ECO:0000255" key="1">
    <source>
        <dbReference type="HAMAP-Rule" id="MF_01080"/>
    </source>
</evidence>
<feature type="chain" id="PRO_1000084573" description="tRNA pseudouridine synthase B">
    <location>
        <begin position="1"/>
        <end position="289"/>
    </location>
</feature>
<feature type="active site" description="Nucleophile" evidence="1">
    <location>
        <position position="38"/>
    </location>
</feature>
<keyword id="KW-0413">Isomerase</keyword>
<keyword id="KW-1185">Reference proteome</keyword>
<keyword id="KW-0819">tRNA processing</keyword>
<dbReference type="EC" id="5.4.99.25" evidence="1"/>
<dbReference type="EMBL" id="CP000382">
    <property type="protein sequence ID" value="ABK60804.1"/>
    <property type="molecule type" value="Genomic_DNA"/>
</dbReference>
<dbReference type="RefSeq" id="WP_011722206.1">
    <property type="nucleotide sequence ID" value="NC_008593.1"/>
</dbReference>
<dbReference type="SMR" id="A0Q0Q4"/>
<dbReference type="STRING" id="386415.NT01CX_2133"/>
<dbReference type="KEGG" id="cno:NT01CX_2133"/>
<dbReference type="PATRIC" id="fig|386415.7.peg.1238"/>
<dbReference type="eggNOG" id="COG0130">
    <property type="taxonomic scope" value="Bacteria"/>
</dbReference>
<dbReference type="HOGENOM" id="CLU_032087_0_1_9"/>
<dbReference type="Proteomes" id="UP000008220">
    <property type="component" value="Chromosome"/>
</dbReference>
<dbReference type="GO" id="GO:0003723">
    <property type="term" value="F:RNA binding"/>
    <property type="evidence" value="ECO:0007669"/>
    <property type="project" value="InterPro"/>
</dbReference>
<dbReference type="GO" id="GO:0160148">
    <property type="term" value="F:tRNA pseudouridine(55) synthase activity"/>
    <property type="evidence" value="ECO:0007669"/>
    <property type="project" value="UniProtKB-EC"/>
</dbReference>
<dbReference type="GO" id="GO:1990481">
    <property type="term" value="P:mRNA pseudouridine synthesis"/>
    <property type="evidence" value="ECO:0007669"/>
    <property type="project" value="TreeGrafter"/>
</dbReference>
<dbReference type="GO" id="GO:0031119">
    <property type="term" value="P:tRNA pseudouridine synthesis"/>
    <property type="evidence" value="ECO:0007669"/>
    <property type="project" value="UniProtKB-UniRule"/>
</dbReference>
<dbReference type="CDD" id="cd02573">
    <property type="entry name" value="PseudoU_synth_EcTruB"/>
    <property type="match status" value="1"/>
</dbReference>
<dbReference type="Gene3D" id="3.30.2350.10">
    <property type="entry name" value="Pseudouridine synthase"/>
    <property type="match status" value="1"/>
</dbReference>
<dbReference type="HAMAP" id="MF_01080">
    <property type="entry name" value="TruB_bact"/>
    <property type="match status" value="1"/>
</dbReference>
<dbReference type="InterPro" id="IPR020103">
    <property type="entry name" value="PsdUridine_synth_cat_dom_sf"/>
</dbReference>
<dbReference type="InterPro" id="IPR002501">
    <property type="entry name" value="PsdUridine_synth_N"/>
</dbReference>
<dbReference type="InterPro" id="IPR014780">
    <property type="entry name" value="tRNA_psdUridine_synth_TruB"/>
</dbReference>
<dbReference type="InterPro" id="IPR032819">
    <property type="entry name" value="TruB_C"/>
</dbReference>
<dbReference type="NCBIfam" id="TIGR00431">
    <property type="entry name" value="TruB"/>
    <property type="match status" value="1"/>
</dbReference>
<dbReference type="PANTHER" id="PTHR13767:SF2">
    <property type="entry name" value="PSEUDOURIDYLATE SYNTHASE TRUB1"/>
    <property type="match status" value="1"/>
</dbReference>
<dbReference type="PANTHER" id="PTHR13767">
    <property type="entry name" value="TRNA-PSEUDOURIDINE SYNTHASE"/>
    <property type="match status" value="1"/>
</dbReference>
<dbReference type="Pfam" id="PF16198">
    <property type="entry name" value="TruB_C_2"/>
    <property type="match status" value="1"/>
</dbReference>
<dbReference type="Pfam" id="PF01509">
    <property type="entry name" value="TruB_N"/>
    <property type="match status" value="1"/>
</dbReference>
<dbReference type="SUPFAM" id="SSF55120">
    <property type="entry name" value="Pseudouridine synthase"/>
    <property type="match status" value="1"/>
</dbReference>
<sequence>MNGILNVYKPIGITSFDVVCQIKKITGIKKIGHTGTLDPLACGVLPVCIGKGTKVVDYLMKDFKVYDATFKLGIITDTYDREGKELSISEVNVSLDEIECAVNSFLGDSFQVPPMYSALKVNGKRLYELAREGKSIEREARPITIYDINILHIDIPYVKFRVKCSKGTYIRSLCYDIGSNLKCGATMWDLERVQSGAFTKENSIELNKLTTDNINDYIISIDESLNQYDKAFVSSKCEKLLVNGVRIGDKRLLPNLDINKMYRIYSEDNKFLGLGMRNSKGLKIEKLLL</sequence>
<protein>
    <recommendedName>
        <fullName evidence="1">tRNA pseudouridine synthase B</fullName>
        <ecNumber evidence="1">5.4.99.25</ecNumber>
    </recommendedName>
    <alternativeName>
        <fullName evidence="1">tRNA pseudouridine(55) synthase</fullName>
        <shortName evidence="1">Psi55 synthase</shortName>
    </alternativeName>
    <alternativeName>
        <fullName evidence="1">tRNA pseudouridylate synthase</fullName>
    </alternativeName>
    <alternativeName>
        <fullName evidence="1">tRNA-uridine isomerase</fullName>
    </alternativeName>
</protein>